<protein>
    <recommendedName>
        <fullName evidence="6">Protein PHR1-LIKE 3</fullName>
    </recommendedName>
    <alternativeName>
        <fullName evidence="6">Myb family transcription factor PHL3</fullName>
    </alternativeName>
    <alternativeName>
        <fullName evidence="5">Protein UNFERTILIZED EMBRYO SAC 16</fullName>
    </alternativeName>
</protein>
<proteinExistence type="evidence at protein level"/>
<comment type="function">
    <text evidence="3 4">Transcriptional activator (PubMed:26586833). Probable component of the central regulatory system controlling transcriptional responses to Pi starvation (PubMed:26586833). Binds in a sequence-specific manner to phosphate starvation-regulated promoters (PubMed:26586833). Required for female gametophyte development and function (PubMed:15634699).</text>
</comment>
<comment type="subunit">
    <text evidence="4">Homo- and heterodimers (PubMed:26586833). Interacts with PHL2, but not with PHR1 (PubMed:26586833).</text>
</comment>
<comment type="interaction">
    <interactant intactId="EBI-4443730">
        <id>Q8LAJ7</id>
    </interactant>
    <interactant intactId="EBI-2000137">
        <id>Q9MAI5</id>
        <label>ERF8</label>
    </interactant>
    <organismsDiffer>false</organismsDiffer>
    <experiments>3</experiments>
</comment>
<comment type="interaction">
    <interactant intactId="EBI-4443730">
        <id>Q8LAJ7</id>
    </interactant>
    <interactant intactId="EBI-632243">
        <id>P93830</id>
        <label>IAA17</label>
    </interactant>
    <organismsDiffer>false</organismsDiffer>
    <experiments>3</experiments>
</comment>
<comment type="interaction">
    <interactant intactId="EBI-4443730">
        <id>Q8LAJ7</id>
    </interactant>
    <interactant intactId="EBI-541115">
        <id>Q9FNZ4</id>
        <label>NIMIN-3</label>
    </interactant>
    <organismsDiffer>false</organismsDiffer>
    <experiments>3</experiments>
</comment>
<comment type="interaction">
    <interactant intactId="EBI-4443730">
        <id>Q8LAJ7</id>
    </interactant>
    <interactant intactId="EBI-1238466">
        <id>Q9FL03</id>
        <label>SCL4</label>
    </interactant>
    <organismsDiffer>false</organismsDiffer>
    <experiments>3</experiments>
</comment>
<comment type="interaction">
    <interactant intactId="EBI-4443730">
        <id>Q8LAJ7</id>
    </interactant>
    <interactant intactId="EBI-4428591">
        <id>O81316</id>
        <label>SCL6</label>
    </interactant>
    <organismsDiffer>false</organismsDiffer>
    <experiments>3</experiments>
</comment>
<comment type="subcellular location">
    <subcellularLocation>
        <location evidence="4">Nucleus</location>
    </subcellularLocation>
</comment>
<comment type="alternative products">
    <event type="alternative splicing"/>
    <isoform>
        <id>Q8LAJ7-1</id>
        <name>1</name>
        <sequence type="displayed"/>
    </isoform>
    <isoform>
        <id>Q8LAJ7-2</id>
        <name>2</name>
        <sequence type="described" ref="VSP_058430"/>
    </isoform>
</comment>
<comment type="induction">
    <text evidence="4">Up-regulated in roots by low Pi.</text>
</comment>
<comment type="disruption phenotype">
    <text evidence="3 4">Embryo lethal.</text>
</comment>
<comment type="similarity">
    <text evidence="7">Belongs to the MYB-CC family.</text>
</comment>
<comment type="sequence caution" evidence="7">
    <conflict type="miscellaneous discrepancy">
        <sequence resource="EMBL-CDS" id="AAL91199"/>
    </conflict>
    <text>Intron retention.</text>
</comment>
<comment type="sequence caution" evidence="7">
    <conflict type="erroneous gene model prediction">
        <sequence resource="EMBL-CDS" id="CAB36828"/>
    </conflict>
</comment>
<comment type="sequence caution" evidence="7">
    <conflict type="erroneous gene model prediction">
        <sequence resource="EMBL-CDS" id="CAB78406"/>
    </conflict>
</comment>
<evidence type="ECO:0000255" key="1"/>
<evidence type="ECO:0000255" key="2">
    <source>
        <dbReference type="PROSITE-ProRule" id="PRU00625"/>
    </source>
</evidence>
<evidence type="ECO:0000269" key="3">
    <source>
    </source>
</evidence>
<evidence type="ECO:0000269" key="4">
    <source>
    </source>
</evidence>
<evidence type="ECO:0000303" key="5">
    <source>
    </source>
</evidence>
<evidence type="ECO:0000303" key="6">
    <source>
    </source>
</evidence>
<evidence type="ECO:0000305" key="7"/>
<evidence type="ECO:0000312" key="8">
    <source>
        <dbReference type="Araport" id="AT4G13640"/>
    </source>
</evidence>
<evidence type="ECO:0000312" key="9">
    <source>
        <dbReference type="EMBL" id="AAM65307.1"/>
    </source>
</evidence>
<evidence type="ECO:0000312" key="10">
    <source>
        <dbReference type="EMBL" id="CAB36828.1"/>
    </source>
</evidence>
<feature type="chain" id="PRO_0000436860" description="Protein PHR1-LIKE 3">
    <location>
        <begin position="1"/>
        <end position="292"/>
    </location>
</feature>
<feature type="domain" description="HTH myb-type" evidence="2">
    <location>
        <begin position="34"/>
        <end position="94"/>
    </location>
</feature>
<feature type="DNA-binding region" description="H-T-H motif" evidence="2">
    <location>
        <begin position="65"/>
        <end position="90"/>
    </location>
</feature>
<feature type="coiled-coil region" evidence="1">
    <location>
        <begin position="137"/>
        <end position="157"/>
    </location>
</feature>
<feature type="short sequence motif" description="LHEQLE" evidence="7">
    <location>
        <begin position="150"/>
        <end position="155"/>
    </location>
</feature>
<feature type="splice variant" id="VSP_058430" description="In isoform 2.">
    <original>E</original>
    <variation>EYTQ</variation>
    <location>
        <position position="155"/>
    </location>
</feature>
<organism evidence="9">
    <name type="scientific">Arabidopsis thaliana</name>
    <name type="common">Mouse-ear cress</name>
    <dbReference type="NCBI Taxonomy" id="3702"/>
    <lineage>
        <taxon>Eukaryota</taxon>
        <taxon>Viridiplantae</taxon>
        <taxon>Streptophyta</taxon>
        <taxon>Embryophyta</taxon>
        <taxon>Tracheophyta</taxon>
        <taxon>Spermatophyta</taxon>
        <taxon>Magnoliopsida</taxon>
        <taxon>eudicotyledons</taxon>
        <taxon>Gunneridae</taxon>
        <taxon>Pentapetalae</taxon>
        <taxon>rosids</taxon>
        <taxon>malvids</taxon>
        <taxon>Brassicales</taxon>
        <taxon>Brassicaceae</taxon>
        <taxon>Camelineae</taxon>
        <taxon>Arabidopsis</taxon>
    </lineage>
</organism>
<dbReference type="EMBL" id="AL035528">
    <property type="protein sequence ID" value="CAB36828.1"/>
    <property type="status" value="ALT_SEQ"/>
    <property type="molecule type" value="Genomic_DNA"/>
</dbReference>
<dbReference type="EMBL" id="AL161537">
    <property type="protein sequence ID" value="CAB78406.1"/>
    <property type="status" value="ALT_SEQ"/>
    <property type="molecule type" value="Genomic_DNA"/>
</dbReference>
<dbReference type="EMBL" id="CP002687">
    <property type="protein sequence ID" value="AEE83307.1"/>
    <property type="molecule type" value="Genomic_DNA"/>
</dbReference>
<dbReference type="EMBL" id="CP002687">
    <property type="protein sequence ID" value="AEE83308.1"/>
    <property type="molecule type" value="Genomic_DNA"/>
</dbReference>
<dbReference type="EMBL" id="AY081310">
    <property type="protein sequence ID" value="AAL91199.1"/>
    <property type="status" value="ALT_SEQ"/>
    <property type="molecule type" value="mRNA"/>
</dbReference>
<dbReference type="EMBL" id="AY114630">
    <property type="protein sequence ID" value="AAM47949.1"/>
    <property type="molecule type" value="mRNA"/>
</dbReference>
<dbReference type="EMBL" id="AK226443">
    <property type="protein sequence ID" value="BAE98586.1"/>
    <property type="molecule type" value="mRNA"/>
</dbReference>
<dbReference type="EMBL" id="AY087771">
    <property type="protein sequence ID" value="AAM65307.1"/>
    <property type="molecule type" value="mRNA"/>
</dbReference>
<dbReference type="PIR" id="T05233">
    <property type="entry name" value="T05233"/>
</dbReference>
<dbReference type="RefSeq" id="NP_001031626.1">
    <molecule id="Q8LAJ7-2"/>
    <property type="nucleotide sequence ID" value="NM_001036549.2"/>
</dbReference>
<dbReference type="RefSeq" id="NP_567408.1">
    <molecule id="Q8LAJ7-1"/>
    <property type="nucleotide sequence ID" value="NM_117438.4"/>
</dbReference>
<dbReference type="SMR" id="Q8LAJ7"/>
<dbReference type="FunCoup" id="Q8LAJ7">
    <property type="interactions" value="1245"/>
</dbReference>
<dbReference type="IntAct" id="Q8LAJ7">
    <property type="interactions" value="13"/>
</dbReference>
<dbReference type="STRING" id="3702.Q8LAJ7"/>
<dbReference type="PaxDb" id="3702-AT4G13640.2"/>
<dbReference type="ProteomicsDB" id="236314">
    <molecule id="Q8LAJ7-1"/>
</dbReference>
<dbReference type="EnsemblPlants" id="AT4G13640.1">
    <molecule id="Q8LAJ7-1"/>
    <property type="protein sequence ID" value="AT4G13640.1"/>
    <property type="gene ID" value="AT4G13640"/>
</dbReference>
<dbReference type="EnsemblPlants" id="AT4G13640.2">
    <molecule id="Q8LAJ7-2"/>
    <property type="protein sequence ID" value="AT4G13640.2"/>
    <property type="gene ID" value="AT4G13640"/>
</dbReference>
<dbReference type="GeneID" id="826998"/>
<dbReference type="Gramene" id="AT4G13640.1">
    <molecule id="Q8LAJ7-1"/>
    <property type="protein sequence ID" value="AT4G13640.1"/>
    <property type="gene ID" value="AT4G13640"/>
</dbReference>
<dbReference type="Gramene" id="AT4G13640.2">
    <molecule id="Q8LAJ7-2"/>
    <property type="protein sequence ID" value="AT4G13640.2"/>
    <property type="gene ID" value="AT4G13640"/>
</dbReference>
<dbReference type="KEGG" id="ath:AT4G13640"/>
<dbReference type="Araport" id="AT4G13640"/>
<dbReference type="TAIR" id="AT4G13640">
    <property type="gene designation" value="UNE16"/>
</dbReference>
<dbReference type="eggNOG" id="ENOG502QVJ9">
    <property type="taxonomic scope" value="Eukaryota"/>
</dbReference>
<dbReference type="HOGENOM" id="CLU_053944_2_2_1"/>
<dbReference type="InParanoid" id="Q8LAJ7"/>
<dbReference type="OMA" id="ATLMKRH"/>
<dbReference type="OrthoDB" id="551907at2759"/>
<dbReference type="PhylomeDB" id="Q8LAJ7"/>
<dbReference type="PRO" id="PR:Q8LAJ7"/>
<dbReference type="Proteomes" id="UP000006548">
    <property type="component" value="Chromosome 4"/>
</dbReference>
<dbReference type="ExpressionAtlas" id="Q8LAJ7">
    <property type="expression patterns" value="baseline and differential"/>
</dbReference>
<dbReference type="GO" id="GO:0005634">
    <property type="term" value="C:nucleus"/>
    <property type="evidence" value="ECO:0000314"/>
    <property type="project" value="TAIR"/>
</dbReference>
<dbReference type="GO" id="GO:0003700">
    <property type="term" value="F:DNA-binding transcription factor activity"/>
    <property type="evidence" value="ECO:0000250"/>
    <property type="project" value="TAIR"/>
</dbReference>
<dbReference type="GO" id="GO:0043565">
    <property type="term" value="F:sequence-specific DNA binding"/>
    <property type="evidence" value="ECO:0000314"/>
    <property type="project" value="TAIR"/>
</dbReference>
<dbReference type="GO" id="GO:0009567">
    <property type="term" value="P:double fertilization forming a zygote and endosperm"/>
    <property type="evidence" value="ECO:0000315"/>
    <property type="project" value="TAIR"/>
</dbReference>
<dbReference type="GO" id="GO:0010628">
    <property type="term" value="P:positive regulation of gene expression"/>
    <property type="evidence" value="ECO:0000314"/>
    <property type="project" value="TAIR"/>
</dbReference>
<dbReference type="FunFam" id="1.10.10.60:FF:000002">
    <property type="entry name" value="Myb family transcription factor"/>
    <property type="match status" value="1"/>
</dbReference>
<dbReference type="Gene3D" id="1.10.10.60">
    <property type="entry name" value="Homeodomain-like"/>
    <property type="match status" value="1"/>
</dbReference>
<dbReference type="InterPro" id="IPR009057">
    <property type="entry name" value="Homeodomain-like_sf"/>
</dbReference>
<dbReference type="InterPro" id="IPR025756">
    <property type="entry name" value="Myb_CC_LHEQLE"/>
</dbReference>
<dbReference type="InterPro" id="IPR017930">
    <property type="entry name" value="Myb_dom"/>
</dbReference>
<dbReference type="InterPro" id="IPR006447">
    <property type="entry name" value="Myb_dom_plants"/>
</dbReference>
<dbReference type="InterPro" id="IPR046955">
    <property type="entry name" value="PHR1-like"/>
</dbReference>
<dbReference type="InterPro" id="IPR001005">
    <property type="entry name" value="SANT/Myb"/>
</dbReference>
<dbReference type="NCBIfam" id="TIGR01557">
    <property type="entry name" value="myb_SHAQKYF"/>
    <property type="match status" value="1"/>
</dbReference>
<dbReference type="PANTHER" id="PTHR31499">
    <property type="entry name" value="MYB FAMILY TRANSCRIPTION FACTOR PHL11"/>
    <property type="match status" value="1"/>
</dbReference>
<dbReference type="PANTHER" id="PTHR31499:SF53">
    <property type="entry name" value="PROTEIN PHR1-LIKE 3"/>
    <property type="match status" value="1"/>
</dbReference>
<dbReference type="Pfam" id="PF14379">
    <property type="entry name" value="Myb_CC_LHEQLE"/>
    <property type="match status" value="1"/>
</dbReference>
<dbReference type="Pfam" id="PF00249">
    <property type="entry name" value="Myb_DNA-binding"/>
    <property type="match status" value="1"/>
</dbReference>
<dbReference type="SUPFAM" id="SSF46689">
    <property type="entry name" value="Homeodomain-like"/>
    <property type="match status" value="1"/>
</dbReference>
<dbReference type="PROSITE" id="PS51294">
    <property type="entry name" value="HTH_MYB"/>
    <property type="match status" value="1"/>
</dbReference>
<name>PHL3_ARATH</name>
<accession>Q8LAJ7</accession>
<accession>F4JTR5</accession>
<accession>Q8RXE4</accession>
<accession>Q9SVP8</accession>
<sequence length="292" mass="31723">MYSAIRSSLPLDGSLGDYSDGTNLPIDACLVLTTDPKPRLRWTSELHERFVDAVTQLGGPDKATPKTIMRTMGVKGLTLYHLKSHLQKFRLGRQSCKESIDNSKDVSCVAESQDTGSSSTSSLRLAAQEQNESYQVTEALRAQMEVQRRLHEQLEVQRRLQLRIEAQGKYLQSILEKACKAIEEQAVAFAGLEAAREELSELAIKASITNGCQGTTSTFDTTKMMIPSLSELAVAIEHKNNCSAESSLTSSTVGSPVSAALMKKRQRGVFGNGDSVVVGHDAGWVMPSSSIG</sequence>
<gene>
    <name evidence="6" type="primary">PHL3</name>
    <name evidence="5" type="synonym">UNE16</name>
    <name evidence="8" type="ordered locus">At4g13640</name>
    <name evidence="10" type="ORF">F18A5.30</name>
</gene>
<keyword id="KW-0025">Alternative splicing</keyword>
<keyword id="KW-0175">Coiled coil</keyword>
<keyword id="KW-0238">DNA-binding</keyword>
<keyword id="KW-0539">Nucleus</keyword>
<keyword id="KW-1185">Reference proteome</keyword>
<keyword id="KW-0804">Transcription</keyword>
<keyword id="KW-0805">Transcription regulation</keyword>
<reference key="1">
    <citation type="journal article" date="1999" name="Nature">
        <title>Sequence and analysis of chromosome 4 of the plant Arabidopsis thaliana.</title>
        <authorList>
            <person name="Mayer K.F.X."/>
            <person name="Schueller C."/>
            <person name="Wambutt R."/>
            <person name="Murphy G."/>
            <person name="Volckaert G."/>
            <person name="Pohl T."/>
            <person name="Duesterhoeft A."/>
            <person name="Stiekema W."/>
            <person name="Entian K.-D."/>
            <person name="Terryn N."/>
            <person name="Harris B."/>
            <person name="Ansorge W."/>
            <person name="Brandt P."/>
            <person name="Grivell L.A."/>
            <person name="Rieger M."/>
            <person name="Weichselgartner M."/>
            <person name="de Simone V."/>
            <person name="Obermaier B."/>
            <person name="Mache R."/>
            <person name="Mueller M."/>
            <person name="Kreis M."/>
            <person name="Delseny M."/>
            <person name="Puigdomenech P."/>
            <person name="Watson M."/>
            <person name="Schmidtheini T."/>
            <person name="Reichert B."/>
            <person name="Portetelle D."/>
            <person name="Perez-Alonso M."/>
            <person name="Boutry M."/>
            <person name="Bancroft I."/>
            <person name="Vos P."/>
            <person name="Hoheisel J."/>
            <person name="Zimmermann W."/>
            <person name="Wedler H."/>
            <person name="Ridley P."/>
            <person name="Langham S.-A."/>
            <person name="McCullagh B."/>
            <person name="Bilham L."/>
            <person name="Robben J."/>
            <person name="van der Schueren J."/>
            <person name="Grymonprez B."/>
            <person name="Chuang Y.-J."/>
            <person name="Vandenbussche F."/>
            <person name="Braeken M."/>
            <person name="Weltjens I."/>
            <person name="Voet M."/>
            <person name="Bastiaens I."/>
            <person name="Aert R."/>
            <person name="Defoor E."/>
            <person name="Weitzenegger T."/>
            <person name="Bothe G."/>
            <person name="Ramsperger U."/>
            <person name="Hilbert H."/>
            <person name="Braun M."/>
            <person name="Holzer E."/>
            <person name="Brandt A."/>
            <person name="Peters S."/>
            <person name="van Staveren M."/>
            <person name="Dirkse W."/>
            <person name="Mooijman P."/>
            <person name="Klein Lankhorst R."/>
            <person name="Rose M."/>
            <person name="Hauf J."/>
            <person name="Koetter P."/>
            <person name="Berneiser S."/>
            <person name="Hempel S."/>
            <person name="Feldpausch M."/>
            <person name="Lamberth S."/>
            <person name="Van den Daele H."/>
            <person name="De Keyser A."/>
            <person name="Buysshaert C."/>
            <person name="Gielen J."/>
            <person name="Villarroel R."/>
            <person name="De Clercq R."/>
            <person name="van Montagu M."/>
            <person name="Rogers J."/>
            <person name="Cronin A."/>
            <person name="Quail M.A."/>
            <person name="Bray-Allen S."/>
            <person name="Clark L."/>
            <person name="Doggett J."/>
            <person name="Hall S."/>
            <person name="Kay M."/>
            <person name="Lennard N."/>
            <person name="McLay K."/>
            <person name="Mayes R."/>
            <person name="Pettett A."/>
            <person name="Rajandream M.A."/>
            <person name="Lyne M."/>
            <person name="Benes V."/>
            <person name="Rechmann S."/>
            <person name="Borkova D."/>
            <person name="Bloecker H."/>
            <person name="Scharfe M."/>
            <person name="Grimm M."/>
            <person name="Loehnert T.-H."/>
            <person name="Dose S."/>
            <person name="de Haan M."/>
            <person name="Maarse A.C."/>
            <person name="Schaefer M."/>
            <person name="Mueller-Auer S."/>
            <person name="Gabel C."/>
            <person name="Fuchs M."/>
            <person name="Fartmann B."/>
            <person name="Granderath K."/>
            <person name="Dauner D."/>
            <person name="Herzl A."/>
            <person name="Neumann S."/>
            <person name="Argiriou A."/>
            <person name="Vitale D."/>
            <person name="Liguori R."/>
            <person name="Piravandi E."/>
            <person name="Massenet O."/>
            <person name="Quigley F."/>
            <person name="Clabauld G."/>
            <person name="Muendlein A."/>
            <person name="Felber R."/>
            <person name="Schnabl S."/>
            <person name="Hiller R."/>
            <person name="Schmidt W."/>
            <person name="Lecharny A."/>
            <person name="Aubourg S."/>
            <person name="Chefdor F."/>
            <person name="Cooke R."/>
            <person name="Berger C."/>
            <person name="Monfort A."/>
            <person name="Casacuberta E."/>
            <person name="Gibbons T."/>
            <person name="Weber N."/>
            <person name="Vandenbol M."/>
            <person name="Bargues M."/>
            <person name="Terol J."/>
            <person name="Torres A."/>
            <person name="Perez-Perez A."/>
            <person name="Purnelle B."/>
            <person name="Bent E."/>
            <person name="Johnson S."/>
            <person name="Tacon D."/>
            <person name="Jesse T."/>
            <person name="Heijnen L."/>
            <person name="Schwarz S."/>
            <person name="Scholler P."/>
            <person name="Heber S."/>
            <person name="Francs P."/>
            <person name="Bielke C."/>
            <person name="Frishman D."/>
            <person name="Haase D."/>
            <person name="Lemcke K."/>
            <person name="Mewes H.-W."/>
            <person name="Stocker S."/>
            <person name="Zaccaria P."/>
            <person name="Bevan M."/>
            <person name="Wilson R.K."/>
            <person name="de la Bastide M."/>
            <person name="Habermann K."/>
            <person name="Parnell L."/>
            <person name="Dedhia N."/>
            <person name="Gnoj L."/>
            <person name="Schutz K."/>
            <person name="Huang E."/>
            <person name="Spiegel L."/>
            <person name="Sekhon M."/>
            <person name="Murray J."/>
            <person name="Sheet P."/>
            <person name="Cordes M."/>
            <person name="Abu-Threideh J."/>
            <person name="Stoneking T."/>
            <person name="Kalicki J."/>
            <person name="Graves T."/>
            <person name="Harmon G."/>
            <person name="Edwards J."/>
            <person name="Latreille P."/>
            <person name="Courtney L."/>
            <person name="Cloud J."/>
            <person name="Abbott A."/>
            <person name="Scott K."/>
            <person name="Johnson D."/>
            <person name="Minx P."/>
            <person name="Bentley D."/>
            <person name="Fulton B."/>
            <person name="Miller N."/>
            <person name="Greco T."/>
            <person name="Kemp K."/>
            <person name="Kramer J."/>
            <person name="Fulton L."/>
            <person name="Mardis E."/>
            <person name="Dante M."/>
            <person name="Pepin K."/>
            <person name="Hillier L.W."/>
            <person name="Nelson J."/>
            <person name="Spieth J."/>
            <person name="Ryan E."/>
            <person name="Andrews S."/>
            <person name="Geisel C."/>
            <person name="Layman D."/>
            <person name="Du H."/>
            <person name="Ali J."/>
            <person name="Berghoff A."/>
            <person name="Jones K."/>
            <person name="Drone K."/>
            <person name="Cotton M."/>
            <person name="Joshu C."/>
            <person name="Antonoiu B."/>
            <person name="Zidanic M."/>
            <person name="Strong C."/>
            <person name="Sun H."/>
            <person name="Lamar B."/>
            <person name="Yordan C."/>
            <person name="Ma P."/>
            <person name="Zhong J."/>
            <person name="Preston R."/>
            <person name="Vil D."/>
            <person name="Shekher M."/>
            <person name="Matero A."/>
            <person name="Shah R."/>
            <person name="Swaby I.K."/>
            <person name="O'Shaughnessy A."/>
            <person name="Rodriguez M."/>
            <person name="Hoffman J."/>
            <person name="Till S."/>
            <person name="Granat S."/>
            <person name="Shohdy N."/>
            <person name="Hasegawa A."/>
            <person name="Hameed A."/>
            <person name="Lodhi M."/>
            <person name="Johnson A."/>
            <person name="Chen E."/>
            <person name="Marra M.A."/>
            <person name="Martienssen R."/>
            <person name="McCombie W.R."/>
        </authorList>
    </citation>
    <scope>NUCLEOTIDE SEQUENCE [LARGE SCALE GENOMIC DNA]</scope>
    <source>
        <strain>cv. Columbia</strain>
    </source>
</reference>
<reference key="2">
    <citation type="journal article" date="2017" name="Plant J.">
        <title>Araport11: a complete reannotation of the Arabidopsis thaliana reference genome.</title>
        <authorList>
            <person name="Cheng C.Y."/>
            <person name="Krishnakumar V."/>
            <person name="Chan A.P."/>
            <person name="Thibaud-Nissen F."/>
            <person name="Schobel S."/>
            <person name="Town C.D."/>
        </authorList>
    </citation>
    <scope>GENOME REANNOTATION</scope>
    <source>
        <strain>cv. Columbia</strain>
    </source>
</reference>
<reference key="3">
    <citation type="journal article" date="2003" name="Science">
        <title>Empirical analysis of transcriptional activity in the Arabidopsis genome.</title>
        <authorList>
            <person name="Yamada K."/>
            <person name="Lim J."/>
            <person name="Dale J.M."/>
            <person name="Chen H."/>
            <person name="Shinn P."/>
            <person name="Palm C.J."/>
            <person name="Southwick A.M."/>
            <person name="Wu H.C."/>
            <person name="Kim C.J."/>
            <person name="Nguyen M."/>
            <person name="Pham P.K."/>
            <person name="Cheuk R.F."/>
            <person name="Karlin-Newmann G."/>
            <person name="Liu S.X."/>
            <person name="Lam B."/>
            <person name="Sakano H."/>
            <person name="Wu T."/>
            <person name="Yu G."/>
            <person name="Miranda M."/>
            <person name="Quach H.L."/>
            <person name="Tripp M."/>
            <person name="Chang C.H."/>
            <person name="Lee J.M."/>
            <person name="Toriumi M.J."/>
            <person name="Chan M.M."/>
            <person name="Tang C.C."/>
            <person name="Onodera C.S."/>
            <person name="Deng J.M."/>
            <person name="Akiyama K."/>
            <person name="Ansari Y."/>
            <person name="Arakawa T."/>
            <person name="Banh J."/>
            <person name="Banno F."/>
            <person name="Bowser L."/>
            <person name="Brooks S.Y."/>
            <person name="Carninci P."/>
            <person name="Chao Q."/>
            <person name="Choy N."/>
            <person name="Enju A."/>
            <person name="Goldsmith A.D."/>
            <person name="Gurjal M."/>
            <person name="Hansen N.F."/>
            <person name="Hayashizaki Y."/>
            <person name="Johnson-Hopson C."/>
            <person name="Hsuan V.W."/>
            <person name="Iida K."/>
            <person name="Karnes M."/>
            <person name="Khan S."/>
            <person name="Koesema E."/>
            <person name="Ishida J."/>
            <person name="Jiang P.X."/>
            <person name="Jones T."/>
            <person name="Kawai J."/>
            <person name="Kamiya A."/>
            <person name="Meyers C."/>
            <person name="Nakajima M."/>
            <person name="Narusaka M."/>
            <person name="Seki M."/>
            <person name="Sakurai T."/>
            <person name="Satou M."/>
            <person name="Tamse R."/>
            <person name="Vaysberg M."/>
            <person name="Wallender E.K."/>
            <person name="Wong C."/>
            <person name="Yamamura Y."/>
            <person name="Yuan S."/>
            <person name="Shinozaki K."/>
            <person name="Davis R.W."/>
            <person name="Theologis A."/>
            <person name="Ecker J.R."/>
        </authorList>
    </citation>
    <scope>NUCLEOTIDE SEQUENCE [LARGE SCALE MRNA]</scope>
    <source>
        <strain>cv. Columbia</strain>
    </source>
</reference>
<reference key="4">
    <citation type="submission" date="2006-07" db="EMBL/GenBank/DDBJ databases">
        <title>Large-scale analysis of RIKEN Arabidopsis full-length (RAFL) cDNAs.</title>
        <authorList>
            <person name="Totoki Y."/>
            <person name="Seki M."/>
            <person name="Ishida J."/>
            <person name="Nakajima M."/>
            <person name="Enju A."/>
            <person name="Kamiya A."/>
            <person name="Narusaka M."/>
            <person name="Shin-i T."/>
            <person name="Nakagawa M."/>
            <person name="Sakamoto N."/>
            <person name="Oishi K."/>
            <person name="Kohara Y."/>
            <person name="Kobayashi M."/>
            <person name="Toyoda A."/>
            <person name="Sakaki Y."/>
            <person name="Sakurai T."/>
            <person name="Iida K."/>
            <person name="Akiyama K."/>
            <person name="Satou M."/>
            <person name="Toyoda T."/>
            <person name="Konagaya A."/>
            <person name="Carninci P."/>
            <person name="Kawai J."/>
            <person name="Hayashizaki Y."/>
            <person name="Shinozaki K."/>
        </authorList>
    </citation>
    <scope>NUCLEOTIDE SEQUENCE [LARGE SCALE MRNA] (ISOFORM 1)</scope>
    <source>
        <strain>cv. Columbia</strain>
    </source>
</reference>
<reference key="5">
    <citation type="submission" date="2002-03" db="EMBL/GenBank/DDBJ databases">
        <title>Full-length cDNA from Arabidopsis thaliana.</title>
        <authorList>
            <person name="Brover V.V."/>
            <person name="Troukhan M.E."/>
            <person name="Alexandrov N.A."/>
            <person name="Lu Y.-P."/>
            <person name="Flavell R.B."/>
            <person name="Feldmann K.A."/>
        </authorList>
    </citation>
    <scope>NUCLEOTIDE SEQUENCE [LARGE SCALE MRNA] (ISOFORM 1)</scope>
</reference>
<reference key="6">
    <citation type="journal article" date="2001" name="Genes Dev.">
        <title>A conserved MYB transcription factor involved in phosphate starvation signaling both in vascular plants and in unicellular algae.</title>
        <authorList>
            <person name="Rubio V."/>
            <person name="Linhares F."/>
            <person name="Solano R."/>
            <person name="Martin A.C."/>
            <person name="Iglesias J."/>
            <person name="Leyva A."/>
            <person name="Paz-Ares J."/>
        </authorList>
    </citation>
    <scope>GENE FAMILY</scope>
</reference>
<reference key="7">
    <citation type="journal article" date="2005" name="Development">
        <title>Genetic and molecular identification of genes required for female gametophyte development and function in Arabidopsis.</title>
        <authorList>
            <person name="Pagnussat G.C."/>
            <person name="Yu H.-J."/>
            <person name="Ngo Q.A."/>
            <person name="Rajani S."/>
            <person name="Mayalagu S."/>
            <person name="Johnson C.S."/>
            <person name="Capron A."/>
            <person name="Xie L.-F."/>
            <person name="Ye D."/>
            <person name="Sundaresan V."/>
        </authorList>
    </citation>
    <scope>FUNCTION</scope>
    <scope>DISRUPTION PHENOTYPE</scope>
</reference>
<reference key="8">
    <citation type="journal article" date="2013" name="Plant Signal. Behav.">
        <title>Alternative splicing of Myb-related genes MYR1 and MYR2 may modulate activities through changes in dimerization, localization, or protein folding.</title>
        <authorList>
            <person name="Zhao C."/>
            <person name="Beers E."/>
        </authorList>
    </citation>
    <scope>ALTERNATIVE SPLICING</scope>
</reference>
<reference key="9">
    <citation type="journal article" date="2016" name="Plant Physiol.">
        <title>Arabidopsis PHL2 and PHR1 act redundantly as the key components of the central regulatory system controlling transcriptional responses to phosphate starvation.</title>
        <authorList>
            <person name="Sun L."/>
            <person name="Song L."/>
            <person name="Zhang Y."/>
            <person name="Zheng Z."/>
            <person name="Liu D."/>
        </authorList>
    </citation>
    <scope>FUNCTION</scope>
    <scope>SUBCELLULAR LOCATION</scope>
    <scope>INTERACTION WITH PHL2</scope>
    <scope>SUBUNIT</scope>
    <scope>INDUCTION BY PHOSPHATE</scope>
    <scope>DISRUPTION PHENOTYPE</scope>
</reference>